<gene>
    <name evidence="1" type="primary">dadA</name>
    <name type="ordered locus">xcc-b100_3834</name>
</gene>
<organism>
    <name type="scientific">Xanthomonas campestris pv. campestris (strain B100)</name>
    <dbReference type="NCBI Taxonomy" id="509169"/>
    <lineage>
        <taxon>Bacteria</taxon>
        <taxon>Pseudomonadati</taxon>
        <taxon>Pseudomonadota</taxon>
        <taxon>Gammaproteobacteria</taxon>
        <taxon>Lysobacterales</taxon>
        <taxon>Lysobacteraceae</taxon>
        <taxon>Xanthomonas</taxon>
    </lineage>
</organism>
<name>DADA_XANCB</name>
<feature type="chain" id="PRO_1000138673" description="D-amino acid dehydrogenase">
    <location>
        <begin position="1"/>
        <end position="429"/>
    </location>
</feature>
<feature type="binding site" evidence="1">
    <location>
        <begin position="3"/>
        <end position="17"/>
    </location>
    <ligand>
        <name>FAD</name>
        <dbReference type="ChEBI" id="CHEBI:57692"/>
    </ligand>
</feature>
<proteinExistence type="inferred from homology"/>
<sequence>MRVLILGSGVIGTTTAWYLAQSGCEVTVVDRQPASGLETSYANAGQLSFGYTSPWAAPGVPGKAVKWLFEQHAPLSIRPTRDLRQLAWLSQMLRNCTAERYAVNKARMVRLSDYSRDCLNELRASTGLEFEGRQLGTTQLFRTQQQLDAAAQDIEVLAQYGVPYELLSPAQIAQYEPGLAGGGAQMAGALHLPEDQTGDCRLFTQRLADLATQAGVQFRYGQQIERLEHAGGEITGVQIDGRLVTADRYVLALGSYSADLLLSLGLHLPVYPLKGYSLTIPIVDAQRAPTSTVLDESYKIALTRFDERIRVGGMAEVAGFDLSLNPRRRATLEMVVNDLFPGAGDLAQAEFWTGLRPATPDGTPVVGATPYANLFLNTGHGTLGWTMACGSGRYLADLMQGRTPEIDTEGLDVFRYLSTRSTRPHREAA</sequence>
<accession>B0RWG2</accession>
<protein>
    <recommendedName>
        <fullName evidence="1">D-amino acid dehydrogenase</fullName>
        <ecNumber evidence="1">1.4.99.-</ecNumber>
    </recommendedName>
</protein>
<comment type="function">
    <text evidence="1">Oxidative deamination of D-amino acids.</text>
</comment>
<comment type="catalytic activity">
    <reaction evidence="1">
        <text>a D-alpha-amino acid + A + H2O = a 2-oxocarboxylate + AH2 + NH4(+)</text>
        <dbReference type="Rhea" id="RHEA:18125"/>
        <dbReference type="ChEBI" id="CHEBI:13193"/>
        <dbReference type="ChEBI" id="CHEBI:15377"/>
        <dbReference type="ChEBI" id="CHEBI:17499"/>
        <dbReference type="ChEBI" id="CHEBI:28938"/>
        <dbReference type="ChEBI" id="CHEBI:35179"/>
        <dbReference type="ChEBI" id="CHEBI:59871"/>
    </reaction>
</comment>
<comment type="cofactor">
    <cofactor evidence="1">
        <name>FAD</name>
        <dbReference type="ChEBI" id="CHEBI:57692"/>
    </cofactor>
</comment>
<comment type="pathway">
    <text>Amino-acid degradation; D-alanine degradation; NH(3) and pyruvate from D-alanine: step 1/1.</text>
</comment>
<comment type="similarity">
    <text evidence="1">Belongs to the DadA oxidoreductase family.</text>
</comment>
<keyword id="KW-0274">FAD</keyword>
<keyword id="KW-0285">Flavoprotein</keyword>
<keyword id="KW-0560">Oxidoreductase</keyword>
<dbReference type="EC" id="1.4.99.-" evidence="1"/>
<dbReference type="EMBL" id="AM920689">
    <property type="protein sequence ID" value="CAP53201.1"/>
    <property type="molecule type" value="Genomic_DNA"/>
</dbReference>
<dbReference type="SMR" id="B0RWG2"/>
<dbReference type="KEGG" id="xca:xcc-b100_3834"/>
<dbReference type="HOGENOM" id="CLU_007884_9_2_6"/>
<dbReference type="UniPathway" id="UPA00043">
    <property type="reaction ID" value="UER00498"/>
</dbReference>
<dbReference type="Proteomes" id="UP000001188">
    <property type="component" value="Chromosome"/>
</dbReference>
<dbReference type="GO" id="GO:0005737">
    <property type="term" value="C:cytoplasm"/>
    <property type="evidence" value="ECO:0007669"/>
    <property type="project" value="TreeGrafter"/>
</dbReference>
<dbReference type="GO" id="GO:0005886">
    <property type="term" value="C:plasma membrane"/>
    <property type="evidence" value="ECO:0007669"/>
    <property type="project" value="TreeGrafter"/>
</dbReference>
<dbReference type="GO" id="GO:0008718">
    <property type="term" value="F:D-amino-acid dehydrogenase activity"/>
    <property type="evidence" value="ECO:0007669"/>
    <property type="project" value="UniProtKB-UniRule"/>
</dbReference>
<dbReference type="GO" id="GO:0055130">
    <property type="term" value="P:D-alanine catabolic process"/>
    <property type="evidence" value="ECO:0007669"/>
    <property type="project" value="UniProtKB-UniPathway"/>
</dbReference>
<dbReference type="FunFam" id="3.50.50.60:FF:000020">
    <property type="entry name" value="D-amino acid dehydrogenase"/>
    <property type="match status" value="1"/>
</dbReference>
<dbReference type="Gene3D" id="3.30.9.10">
    <property type="entry name" value="D-Amino Acid Oxidase, subunit A, domain 2"/>
    <property type="match status" value="1"/>
</dbReference>
<dbReference type="Gene3D" id="3.50.50.60">
    <property type="entry name" value="FAD/NAD(P)-binding domain"/>
    <property type="match status" value="2"/>
</dbReference>
<dbReference type="HAMAP" id="MF_01202">
    <property type="entry name" value="DadA"/>
    <property type="match status" value="1"/>
</dbReference>
<dbReference type="InterPro" id="IPR023080">
    <property type="entry name" value="DadA"/>
</dbReference>
<dbReference type="InterPro" id="IPR006076">
    <property type="entry name" value="FAD-dep_OxRdtase"/>
</dbReference>
<dbReference type="InterPro" id="IPR036188">
    <property type="entry name" value="FAD/NAD-bd_sf"/>
</dbReference>
<dbReference type="NCBIfam" id="NF001933">
    <property type="entry name" value="PRK00711.1"/>
    <property type="match status" value="1"/>
</dbReference>
<dbReference type="PANTHER" id="PTHR13847:SF280">
    <property type="entry name" value="D-AMINO ACID DEHYDROGENASE"/>
    <property type="match status" value="1"/>
</dbReference>
<dbReference type="PANTHER" id="PTHR13847">
    <property type="entry name" value="SARCOSINE DEHYDROGENASE-RELATED"/>
    <property type="match status" value="1"/>
</dbReference>
<dbReference type="Pfam" id="PF01266">
    <property type="entry name" value="DAO"/>
    <property type="match status" value="1"/>
</dbReference>
<dbReference type="SUPFAM" id="SSF54373">
    <property type="entry name" value="FAD-linked reductases, C-terminal domain"/>
    <property type="match status" value="1"/>
</dbReference>
<dbReference type="SUPFAM" id="SSF51905">
    <property type="entry name" value="FAD/NAD(P)-binding domain"/>
    <property type="match status" value="1"/>
</dbReference>
<evidence type="ECO:0000255" key="1">
    <source>
        <dbReference type="HAMAP-Rule" id="MF_01202"/>
    </source>
</evidence>
<reference key="1">
    <citation type="journal article" date="2008" name="J. Biotechnol.">
        <title>The genome of Xanthomonas campestris pv. campestris B100 and its use for the reconstruction of metabolic pathways involved in xanthan biosynthesis.</title>
        <authorList>
            <person name="Vorhoelter F.-J."/>
            <person name="Schneiker S."/>
            <person name="Goesmann A."/>
            <person name="Krause L."/>
            <person name="Bekel T."/>
            <person name="Kaiser O."/>
            <person name="Linke B."/>
            <person name="Patschkowski T."/>
            <person name="Rueckert C."/>
            <person name="Schmid J."/>
            <person name="Sidhu V.K."/>
            <person name="Sieber V."/>
            <person name="Tauch A."/>
            <person name="Watt S.A."/>
            <person name="Weisshaar B."/>
            <person name="Becker A."/>
            <person name="Niehaus K."/>
            <person name="Puehler A."/>
        </authorList>
    </citation>
    <scope>NUCLEOTIDE SEQUENCE [LARGE SCALE GENOMIC DNA]</scope>
    <source>
        <strain>B100</strain>
    </source>
</reference>